<comment type="function">
    <text evidence="1">Functions in complex with FlhD as a master transcriptional regulator that regulates transcription of several flagellar and non-flagellar operons by binding to their promoter region. Activates expression of class 2 flagellar genes, including fliA, which is a flagellum-specific sigma factor that turns on the class 3 genes. Also regulates genes whose products function in a variety of physiological pathways.</text>
</comment>
<comment type="cofactor">
    <cofactor evidence="1">
        <name>Zn(2+)</name>
        <dbReference type="ChEBI" id="CHEBI:29105"/>
    </cofactor>
    <text evidence="1">Binds 1 zinc ion per subunit.</text>
</comment>
<comment type="subunit">
    <text evidence="1">Heterohexamer composed of two FlhC and four FlhD subunits. Each FlhC binds a FlhD dimer, forming a heterotrimer, and a hexamer assembles by dimerization of two heterotrimers.</text>
</comment>
<comment type="subcellular location">
    <subcellularLocation>
        <location evidence="1">Cytoplasm</location>
    </subcellularLocation>
</comment>
<comment type="similarity">
    <text evidence="1">Belongs to the FlhC family.</text>
</comment>
<evidence type="ECO:0000255" key="1">
    <source>
        <dbReference type="HAMAP-Rule" id="MF_01891"/>
    </source>
</evidence>
<accession>B2VDW1</accession>
<organism>
    <name type="scientific">Erwinia tasmaniensis (strain DSM 17950 / CFBP 7177 / CIP 109463 / NCPPB 4357 / Et1/99)</name>
    <dbReference type="NCBI Taxonomy" id="465817"/>
    <lineage>
        <taxon>Bacteria</taxon>
        <taxon>Pseudomonadati</taxon>
        <taxon>Pseudomonadota</taxon>
        <taxon>Gammaproteobacteria</taxon>
        <taxon>Enterobacterales</taxon>
        <taxon>Erwiniaceae</taxon>
        <taxon>Erwinia</taxon>
    </lineage>
</organism>
<feature type="chain" id="PRO_0000406761" description="Flagellar transcriptional regulator FlhC">
    <location>
        <begin position="1"/>
        <end position="178"/>
    </location>
</feature>
<feature type="binding site" evidence="1">
    <location>
        <position position="138"/>
    </location>
    <ligand>
        <name>Zn(2+)</name>
        <dbReference type="ChEBI" id="CHEBI:29105"/>
    </ligand>
</feature>
<feature type="binding site" evidence="1">
    <location>
        <position position="141"/>
    </location>
    <ligand>
        <name>Zn(2+)</name>
        <dbReference type="ChEBI" id="CHEBI:29105"/>
    </ligand>
</feature>
<feature type="binding site" evidence="1">
    <location>
        <position position="158"/>
    </location>
    <ligand>
        <name>Zn(2+)</name>
        <dbReference type="ChEBI" id="CHEBI:29105"/>
    </ligand>
</feature>
<feature type="binding site" evidence="1">
    <location>
        <position position="161"/>
    </location>
    <ligand>
        <name>Zn(2+)</name>
        <dbReference type="ChEBI" id="CHEBI:29105"/>
    </ligand>
</feature>
<dbReference type="EMBL" id="CU468135">
    <property type="protein sequence ID" value="CAO95997.1"/>
    <property type="molecule type" value="Genomic_DNA"/>
</dbReference>
<dbReference type="RefSeq" id="WP_012440699.1">
    <property type="nucleotide sequence ID" value="NC_010694.1"/>
</dbReference>
<dbReference type="SMR" id="B2VDW1"/>
<dbReference type="STRING" id="465817.ETA_09510"/>
<dbReference type="KEGG" id="eta:ETA_09510"/>
<dbReference type="eggNOG" id="ENOG502ZD66">
    <property type="taxonomic scope" value="Bacteria"/>
</dbReference>
<dbReference type="HOGENOM" id="CLU_122824_0_0_6"/>
<dbReference type="OrthoDB" id="5570801at2"/>
<dbReference type="Proteomes" id="UP000001726">
    <property type="component" value="Chromosome"/>
</dbReference>
<dbReference type="GO" id="GO:0005737">
    <property type="term" value="C:cytoplasm"/>
    <property type="evidence" value="ECO:0007669"/>
    <property type="project" value="UniProtKB-SubCell"/>
</dbReference>
<dbReference type="GO" id="GO:0003677">
    <property type="term" value="F:DNA binding"/>
    <property type="evidence" value="ECO:0007669"/>
    <property type="project" value="UniProtKB-UniRule"/>
</dbReference>
<dbReference type="GO" id="GO:0008270">
    <property type="term" value="F:zinc ion binding"/>
    <property type="evidence" value="ECO:0007669"/>
    <property type="project" value="UniProtKB-UniRule"/>
</dbReference>
<dbReference type="GO" id="GO:0044781">
    <property type="term" value="P:bacterial-type flagellum organization"/>
    <property type="evidence" value="ECO:0007669"/>
    <property type="project" value="UniProtKB-KW"/>
</dbReference>
<dbReference type="GO" id="GO:0045893">
    <property type="term" value="P:positive regulation of DNA-templated transcription"/>
    <property type="evidence" value="ECO:0007669"/>
    <property type="project" value="InterPro"/>
</dbReference>
<dbReference type="GO" id="GO:1902208">
    <property type="term" value="P:regulation of bacterial-type flagellum assembly"/>
    <property type="evidence" value="ECO:0007669"/>
    <property type="project" value="UniProtKB-UniRule"/>
</dbReference>
<dbReference type="HAMAP" id="MF_01891">
    <property type="entry name" value="FhlC"/>
    <property type="match status" value="1"/>
</dbReference>
<dbReference type="InterPro" id="IPR007944">
    <property type="entry name" value="FlhC"/>
</dbReference>
<dbReference type="NCBIfam" id="NF009365">
    <property type="entry name" value="PRK12722.1"/>
    <property type="match status" value="1"/>
</dbReference>
<dbReference type="Pfam" id="PF05280">
    <property type="entry name" value="FlhC"/>
    <property type="match status" value="1"/>
</dbReference>
<dbReference type="PIRSF" id="PIRSF003159">
    <property type="entry name" value="FlhC"/>
    <property type="match status" value="1"/>
</dbReference>
<dbReference type="SUPFAM" id="SSF160930">
    <property type="entry name" value="FlhC-like"/>
    <property type="match status" value="1"/>
</dbReference>
<name>FLHC_ERWT9</name>
<keyword id="KW-0010">Activator</keyword>
<keyword id="KW-1005">Bacterial flagellum biogenesis</keyword>
<keyword id="KW-0963">Cytoplasm</keyword>
<keyword id="KW-0238">DNA-binding</keyword>
<keyword id="KW-0479">Metal-binding</keyword>
<keyword id="KW-1185">Reference proteome</keyword>
<keyword id="KW-0804">Transcription</keyword>
<keyword id="KW-0805">Transcription regulation</keyword>
<keyword id="KW-0862">Zinc</keyword>
<proteinExistence type="inferred from homology"/>
<reference key="1">
    <citation type="journal article" date="2008" name="Environ. Microbiol.">
        <title>The genome of Erwinia tasmaniensis strain Et1/99, a non-pathogenic bacterium in the genus Erwinia.</title>
        <authorList>
            <person name="Kube M."/>
            <person name="Migdoll A.M."/>
            <person name="Mueller I."/>
            <person name="Kuhl H."/>
            <person name="Beck A."/>
            <person name="Reinhardt R."/>
            <person name="Geider K."/>
        </authorList>
    </citation>
    <scope>NUCLEOTIDE SEQUENCE [LARGE SCALE GENOMIC DNA]</scope>
    <source>
        <strain>DSM 17950 / CFBP 7177 / CIP 109463 / NCPPB 4357 / Et1/99</strain>
    </source>
</reference>
<sequence>MIGKKVLDEIYEINIAMELIVLGARMQVLESETSVSRRRLVRLYKEIRGCPPPKGMLPFSEDWFMCWEQNIHSSLFYNIYLCLQKTENERPITTLMQAYRLYLEQCYPHSSETPVLGLTRAWTLLRFIGCGMISRKSCMLCAGGFVMVTEFIKEPFTCSLCCPPSRALKKFSATSGSS</sequence>
<protein>
    <recommendedName>
        <fullName evidence="1">Flagellar transcriptional regulator FlhC</fullName>
    </recommendedName>
</protein>
<gene>
    <name evidence="1" type="primary">flhC</name>
    <name type="ordered locus">ETA_09510</name>
</gene>